<accession>Q3JXC2</accession>
<keyword id="KW-0067">ATP-binding</keyword>
<keyword id="KW-0436">Ligase</keyword>
<keyword id="KW-0547">Nucleotide-binding</keyword>
<keyword id="KW-0648">Protein biosynthesis</keyword>
<evidence type="ECO:0000255" key="1">
    <source>
        <dbReference type="HAMAP-Rule" id="MF_00122"/>
    </source>
</evidence>
<organism>
    <name type="scientific">Burkholderia pseudomallei (strain 1710b)</name>
    <dbReference type="NCBI Taxonomy" id="320372"/>
    <lineage>
        <taxon>Bacteria</taxon>
        <taxon>Pseudomonadati</taxon>
        <taxon>Pseudomonadota</taxon>
        <taxon>Betaproteobacteria</taxon>
        <taxon>Burkholderiales</taxon>
        <taxon>Burkholderiaceae</taxon>
        <taxon>Burkholderia</taxon>
        <taxon>pseudomallei group</taxon>
    </lineage>
</organism>
<feature type="chain" id="PRO_1000016091" description="Aspartyl/glutamyl-tRNA(Asn/Gln) amidotransferase subunit C">
    <location>
        <begin position="1"/>
        <end position="99"/>
    </location>
</feature>
<dbReference type="EC" id="6.3.5.-" evidence="1"/>
<dbReference type="EMBL" id="CP000124">
    <property type="protein sequence ID" value="ABA49700.1"/>
    <property type="molecule type" value="Genomic_DNA"/>
</dbReference>
<dbReference type="RefSeq" id="WP_004189769.1">
    <property type="nucleotide sequence ID" value="NC_007434.1"/>
</dbReference>
<dbReference type="SMR" id="Q3JXC2"/>
<dbReference type="EnsemblBacteria" id="ABA49700">
    <property type="protein sequence ID" value="ABA49700"/>
    <property type="gene ID" value="BURPS1710b_0367"/>
</dbReference>
<dbReference type="GeneID" id="93058695"/>
<dbReference type="KEGG" id="bpm:BURPS1710b_0367"/>
<dbReference type="HOGENOM" id="CLU_105899_2_2_4"/>
<dbReference type="Proteomes" id="UP000002700">
    <property type="component" value="Chromosome I"/>
</dbReference>
<dbReference type="GO" id="GO:0050566">
    <property type="term" value="F:asparaginyl-tRNA synthase (glutamine-hydrolyzing) activity"/>
    <property type="evidence" value="ECO:0007669"/>
    <property type="project" value="RHEA"/>
</dbReference>
<dbReference type="GO" id="GO:0005524">
    <property type="term" value="F:ATP binding"/>
    <property type="evidence" value="ECO:0007669"/>
    <property type="project" value="UniProtKB-KW"/>
</dbReference>
<dbReference type="GO" id="GO:0050567">
    <property type="term" value="F:glutaminyl-tRNA synthase (glutamine-hydrolyzing) activity"/>
    <property type="evidence" value="ECO:0007669"/>
    <property type="project" value="UniProtKB-UniRule"/>
</dbReference>
<dbReference type="GO" id="GO:0070681">
    <property type="term" value="P:glutaminyl-tRNAGln biosynthesis via transamidation"/>
    <property type="evidence" value="ECO:0007669"/>
    <property type="project" value="TreeGrafter"/>
</dbReference>
<dbReference type="GO" id="GO:0006450">
    <property type="term" value="P:regulation of translational fidelity"/>
    <property type="evidence" value="ECO:0007669"/>
    <property type="project" value="InterPro"/>
</dbReference>
<dbReference type="GO" id="GO:0006412">
    <property type="term" value="P:translation"/>
    <property type="evidence" value="ECO:0007669"/>
    <property type="project" value="UniProtKB-UniRule"/>
</dbReference>
<dbReference type="Gene3D" id="1.10.20.60">
    <property type="entry name" value="Glu-tRNAGln amidotransferase C subunit, N-terminal domain"/>
    <property type="match status" value="1"/>
</dbReference>
<dbReference type="HAMAP" id="MF_00122">
    <property type="entry name" value="GatC"/>
    <property type="match status" value="1"/>
</dbReference>
<dbReference type="InterPro" id="IPR036113">
    <property type="entry name" value="Asp/Glu-ADT_sf_sub_c"/>
</dbReference>
<dbReference type="InterPro" id="IPR003837">
    <property type="entry name" value="GatC"/>
</dbReference>
<dbReference type="NCBIfam" id="TIGR00135">
    <property type="entry name" value="gatC"/>
    <property type="match status" value="1"/>
</dbReference>
<dbReference type="PANTHER" id="PTHR15004">
    <property type="entry name" value="GLUTAMYL-TRNA(GLN) AMIDOTRANSFERASE SUBUNIT C, MITOCHONDRIAL"/>
    <property type="match status" value="1"/>
</dbReference>
<dbReference type="PANTHER" id="PTHR15004:SF0">
    <property type="entry name" value="GLUTAMYL-TRNA(GLN) AMIDOTRANSFERASE SUBUNIT C, MITOCHONDRIAL"/>
    <property type="match status" value="1"/>
</dbReference>
<dbReference type="Pfam" id="PF02686">
    <property type="entry name" value="GatC"/>
    <property type="match status" value="1"/>
</dbReference>
<dbReference type="SUPFAM" id="SSF141000">
    <property type="entry name" value="Glu-tRNAGln amidotransferase C subunit"/>
    <property type="match status" value="1"/>
</dbReference>
<reference key="1">
    <citation type="journal article" date="2010" name="Genome Biol. Evol.">
        <title>Continuing evolution of Burkholderia mallei through genome reduction and large-scale rearrangements.</title>
        <authorList>
            <person name="Losada L."/>
            <person name="Ronning C.M."/>
            <person name="DeShazer D."/>
            <person name="Woods D."/>
            <person name="Fedorova N."/>
            <person name="Kim H.S."/>
            <person name="Shabalina S.A."/>
            <person name="Pearson T.R."/>
            <person name="Brinkac L."/>
            <person name="Tan P."/>
            <person name="Nandi T."/>
            <person name="Crabtree J."/>
            <person name="Badger J."/>
            <person name="Beckstrom-Sternberg S."/>
            <person name="Saqib M."/>
            <person name="Schutzer S.E."/>
            <person name="Keim P."/>
            <person name="Nierman W.C."/>
        </authorList>
    </citation>
    <scope>NUCLEOTIDE SEQUENCE [LARGE SCALE GENOMIC DNA]</scope>
    <source>
        <strain>1710b</strain>
    </source>
</reference>
<protein>
    <recommendedName>
        <fullName evidence="1">Aspartyl/glutamyl-tRNA(Asn/Gln) amidotransferase subunit C</fullName>
        <shortName evidence="1">Asp/Glu-ADT subunit C</shortName>
        <ecNumber evidence="1">6.3.5.-</ecNumber>
    </recommendedName>
</protein>
<name>GATC_BURP1</name>
<gene>
    <name evidence="1" type="primary">gatC</name>
    <name type="ordered locus">BURPS1710b_0367</name>
</gene>
<proteinExistence type="inferred from homology"/>
<comment type="function">
    <text evidence="1">Allows the formation of correctly charged Asn-tRNA(Asn) or Gln-tRNA(Gln) through the transamidation of misacylated Asp-tRNA(Asn) or Glu-tRNA(Gln) in organisms which lack either or both of asparaginyl-tRNA or glutaminyl-tRNA synthetases. The reaction takes place in the presence of glutamine and ATP through an activated phospho-Asp-tRNA(Asn) or phospho-Glu-tRNA(Gln).</text>
</comment>
<comment type="catalytic activity">
    <reaction evidence="1">
        <text>L-glutamyl-tRNA(Gln) + L-glutamine + ATP + H2O = L-glutaminyl-tRNA(Gln) + L-glutamate + ADP + phosphate + H(+)</text>
        <dbReference type="Rhea" id="RHEA:17521"/>
        <dbReference type="Rhea" id="RHEA-COMP:9681"/>
        <dbReference type="Rhea" id="RHEA-COMP:9684"/>
        <dbReference type="ChEBI" id="CHEBI:15377"/>
        <dbReference type="ChEBI" id="CHEBI:15378"/>
        <dbReference type="ChEBI" id="CHEBI:29985"/>
        <dbReference type="ChEBI" id="CHEBI:30616"/>
        <dbReference type="ChEBI" id="CHEBI:43474"/>
        <dbReference type="ChEBI" id="CHEBI:58359"/>
        <dbReference type="ChEBI" id="CHEBI:78520"/>
        <dbReference type="ChEBI" id="CHEBI:78521"/>
        <dbReference type="ChEBI" id="CHEBI:456216"/>
    </reaction>
</comment>
<comment type="catalytic activity">
    <reaction evidence="1">
        <text>L-aspartyl-tRNA(Asn) + L-glutamine + ATP + H2O = L-asparaginyl-tRNA(Asn) + L-glutamate + ADP + phosphate + 2 H(+)</text>
        <dbReference type="Rhea" id="RHEA:14513"/>
        <dbReference type="Rhea" id="RHEA-COMP:9674"/>
        <dbReference type="Rhea" id="RHEA-COMP:9677"/>
        <dbReference type="ChEBI" id="CHEBI:15377"/>
        <dbReference type="ChEBI" id="CHEBI:15378"/>
        <dbReference type="ChEBI" id="CHEBI:29985"/>
        <dbReference type="ChEBI" id="CHEBI:30616"/>
        <dbReference type="ChEBI" id="CHEBI:43474"/>
        <dbReference type="ChEBI" id="CHEBI:58359"/>
        <dbReference type="ChEBI" id="CHEBI:78515"/>
        <dbReference type="ChEBI" id="CHEBI:78516"/>
        <dbReference type="ChEBI" id="CHEBI:456216"/>
    </reaction>
</comment>
<comment type="subunit">
    <text evidence="1">Heterotrimer of A, B and C subunits.</text>
</comment>
<comment type="similarity">
    <text evidence="1">Belongs to the GatC family.</text>
</comment>
<sequence length="99" mass="11030">MALTLTDVTRIAHLARLEMADADAERTLTQLNEFFGLVEQMQAVDTTGIAPLAHPIEQILEVAQRLREDAVTEHVNRDDNQRPAPAVQDGLYLVPKVIE</sequence>